<gene>
    <name type="primary">rps17</name>
</gene>
<feature type="chain" id="PRO_0000128505" description="Small ribosomal subunit protein uS17c">
    <location>
        <begin position="1"/>
        <end position="88"/>
    </location>
</feature>
<dbReference type="EMBL" id="M30487">
    <property type="protein sequence ID" value="AAA63623.1"/>
    <property type="molecule type" value="Genomic_DNA"/>
</dbReference>
<dbReference type="EMBL" id="U30821">
    <property type="protein sequence ID" value="AAA81225.1"/>
    <property type="molecule type" value="Genomic_DNA"/>
</dbReference>
<dbReference type="PIR" id="S12214">
    <property type="entry name" value="R3KT17"/>
</dbReference>
<dbReference type="RefSeq" id="NP_043194.1">
    <property type="nucleotide sequence ID" value="NC_001675.1"/>
</dbReference>
<dbReference type="SMR" id="P23404"/>
<dbReference type="GeneID" id="801685"/>
<dbReference type="GO" id="GO:0009842">
    <property type="term" value="C:cyanelle"/>
    <property type="evidence" value="ECO:0007669"/>
    <property type="project" value="UniProtKB-SubCell"/>
</dbReference>
<dbReference type="GO" id="GO:0022627">
    <property type="term" value="C:cytosolic small ribosomal subunit"/>
    <property type="evidence" value="ECO:0007669"/>
    <property type="project" value="TreeGrafter"/>
</dbReference>
<dbReference type="GO" id="GO:0019843">
    <property type="term" value="F:rRNA binding"/>
    <property type="evidence" value="ECO:0007669"/>
    <property type="project" value="UniProtKB-KW"/>
</dbReference>
<dbReference type="GO" id="GO:0003735">
    <property type="term" value="F:structural constituent of ribosome"/>
    <property type="evidence" value="ECO:0007669"/>
    <property type="project" value="InterPro"/>
</dbReference>
<dbReference type="GO" id="GO:0006412">
    <property type="term" value="P:translation"/>
    <property type="evidence" value="ECO:0007669"/>
    <property type="project" value="InterPro"/>
</dbReference>
<dbReference type="CDD" id="cd00364">
    <property type="entry name" value="Ribosomal_uS17"/>
    <property type="match status" value="1"/>
</dbReference>
<dbReference type="Gene3D" id="2.40.50.140">
    <property type="entry name" value="Nucleic acid-binding proteins"/>
    <property type="match status" value="1"/>
</dbReference>
<dbReference type="HAMAP" id="MF_01345_B">
    <property type="entry name" value="Ribosomal_uS17_B"/>
    <property type="match status" value="1"/>
</dbReference>
<dbReference type="InterPro" id="IPR012340">
    <property type="entry name" value="NA-bd_OB-fold"/>
</dbReference>
<dbReference type="InterPro" id="IPR000266">
    <property type="entry name" value="Ribosomal_uS17"/>
</dbReference>
<dbReference type="InterPro" id="IPR019984">
    <property type="entry name" value="Ribosomal_uS17_bact/chlr"/>
</dbReference>
<dbReference type="InterPro" id="IPR019979">
    <property type="entry name" value="Ribosomal_uS17_CS"/>
</dbReference>
<dbReference type="NCBIfam" id="NF004123">
    <property type="entry name" value="PRK05610.1"/>
    <property type="match status" value="1"/>
</dbReference>
<dbReference type="NCBIfam" id="TIGR03635">
    <property type="entry name" value="uS17_bact"/>
    <property type="match status" value="1"/>
</dbReference>
<dbReference type="PANTHER" id="PTHR10744">
    <property type="entry name" value="40S RIBOSOMAL PROTEIN S11 FAMILY MEMBER"/>
    <property type="match status" value="1"/>
</dbReference>
<dbReference type="PANTHER" id="PTHR10744:SF1">
    <property type="entry name" value="SMALL RIBOSOMAL SUBUNIT PROTEIN US17M"/>
    <property type="match status" value="1"/>
</dbReference>
<dbReference type="Pfam" id="PF00366">
    <property type="entry name" value="Ribosomal_S17"/>
    <property type="match status" value="1"/>
</dbReference>
<dbReference type="PRINTS" id="PR00973">
    <property type="entry name" value="RIBOSOMALS17"/>
</dbReference>
<dbReference type="SUPFAM" id="SSF50249">
    <property type="entry name" value="Nucleic acid-binding proteins"/>
    <property type="match status" value="1"/>
</dbReference>
<dbReference type="PROSITE" id="PS00056">
    <property type="entry name" value="RIBOSOMAL_S17"/>
    <property type="match status" value="1"/>
</dbReference>
<evidence type="ECO:0000250" key="1"/>
<evidence type="ECO:0000305" key="2"/>
<comment type="function">
    <text evidence="1">One of the primary rRNA binding proteins, it binds specifically to the 5'-end of 16S ribosomal RNA.</text>
</comment>
<comment type="subunit">
    <text>Part of the 30S ribosomal subunit.</text>
</comment>
<comment type="subcellular location">
    <subcellularLocation>
        <location>Plastid</location>
        <location>Cyanelle</location>
    </subcellularLocation>
</comment>
<comment type="similarity">
    <text evidence="2">Belongs to the universal ribosomal protein uS17 family.</text>
</comment>
<organism>
    <name type="scientific">Cyanophora paradoxa</name>
    <dbReference type="NCBI Taxonomy" id="2762"/>
    <lineage>
        <taxon>Eukaryota</taxon>
        <taxon>Glaucocystophyceae</taxon>
        <taxon>Cyanophoraceae</taxon>
        <taxon>Cyanophora</taxon>
    </lineage>
</organism>
<accession>P23404</accession>
<keyword id="KW-0194">Cyanelle</keyword>
<keyword id="KW-0934">Plastid</keyword>
<keyword id="KW-0687">Ribonucleoprotein</keyword>
<keyword id="KW-0689">Ribosomal protein</keyword>
<keyword id="KW-0694">RNA-binding</keyword>
<keyword id="KW-0699">rRNA-binding</keyword>
<sequence length="88" mass="10136">MASKERVGVVIRNPQEKTVIVAVNNRVRHNKYSKIIIRTKKYQVHDHSHICKLGDEVKISEVKPISKTKRWIISEVLSSTVNPEKFGD</sequence>
<name>RR17_CYAPA</name>
<reference key="1">
    <citation type="journal article" date="1990" name="Mol. Gen. Genet.">
        <title>The cyanelle S10 spc ribosomal protein gene operon from Cyanophora paradoxa.</title>
        <authorList>
            <person name="Michalowski C.B."/>
            <person name="Pfanzagl B."/>
            <person name="Loeffelhardt W."/>
            <person name="Bohnert H.J."/>
        </authorList>
    </citation>
    <scope>NUCLEOTIDE SEQUENCE [GENOMIC DNA]</scope>
    <source>
        <strain>UTEX LB 555 / Pringsheim</strain>
    </source>
</reference>
<reference key="2">
    <citation type="journal article" date="1995" name="Plant Mol. Biol. Rep.">
        <title>Nucleotide sequence of the cyanelle DNA from Cyanophora paradoxa.</title>
        <authorList>
            <person name="Stirewalt V.L."/>
            <person name="Michalowski C.B."/>
            <person name="Loeffelhardt W."/>
            <person name="Bohnert H.J."/>
            <person name="Bryant D.A."/>
        </authorList>
    </citation>
    <scope>NUCLEOTIDE SEQUENCE [LARGE SCALE GENOMIC DNA]</scope>
    <source>
        <strain>UTEX LB 555 / Pringsheim</strain>
    </source>
</reference>
<reference key="3">
    <citation type="book" date="1997" name="Eukaryotism and symbiosis">
        <title>The complete sequence of the cyanelle genome of Cyanophora paradoxa: the genetic complexity of a primitive plastid.</title>
        <editorList>
            <person name="Schenk H.E.A."/>
            <person name="Herrmann R."/>
            <person name="Jeon K.W."/>
            <person name="Mueller N.E."/>
            <person name="Schwemmler W."/>
        </editorList>
        <authorList>
            <person name="Loeffelhardt W."/>
            <person name="Stirewalt V.L."/>
            <person name="Michalowski C.B."/>
            <person name="Annarella M."/>
            <person name="Farley J.Y."/>
            <person name="Schluchter W.M."/>
            <person name="Chung S."/>
            <person name="Newmann-Spallart C."/>
            <person name="Steiner J.M."/>
            <person name="Jakowitsch J."/>
            <person name="Bohnert H.J."/>
            <person name="Bryant D.A."/>
        </authorList>
    </citation>
    <scope>NUCLEOTIDE SEQUENCE [LARGE SCALE GENOMIC DNA]</scope>
    <source>
        <strain>UTEX LB 555 / Pringsheim</strain>
    </source>
</reference>
<geneLocation type="cyanelle"/>
<protein>
    <recommendedName>
        <fullName evidence="2">Small ribosomal subunit protein uS17c</fullName>
    </recommendedName>
    <alternativeName>
        <fullName>Cyanelle 30S ribosomal protein S17</fullName>
    </alternativeName>
</protein>
<proteinExistence type="inferred from homology"/>